<dbReference type="EMBL" id="AM920689">
    <property type="protein sequence ID" value="CAP52825.1"/>
    <property type="molecule type" value="Genomic_DNA"/>
</dbReference>
<dbReference type="SMR" id="B0RU83"/>
<dbReference type="KEGG" id="xca:xcc-b100_3460"/>
<dbReference type="HOGENOM" id="CLU_122625_1_3_6"/>
<dbReference type="Proteomes" id="UP000001188">
    <property type="component" value="Chromosome"/>
</dbReference>
<dbReference type="GO" id="GO:1990904">
    <property type="term" value="C:ribonucleoprotein complex"/>
    <property type="evidence" value="ECO:0007669"/>
    <property type="project" value="UniProtKB-KW"/>
</dbReference>
<dbReference type="GO" id="GO:0005840">
    <property type="term" value="C:ribosome"/>
    <property type="evidence" value="ECO:0007669"/>
    <property type="project" value="UniProtKB-KW"/>
</dbReference>
<dbReference type="GO" id="GO:0003735">
    <property type="term" value="F:structural constituent of ribosome"/>
    <property type="evidence" value="ECO:0007669"/>
    <property type="project" value="InterPro"/>
</dbReference>
<dbReference type="GO" id="GO:0000049">
    <property type="term" value="F:tRNA binding"/>
    <property type="evidence" value="ECO:0007669"/>
    <property type="project" value="UniProtKB-UniRule"/>
</dbReference>
<dbReference type="GO" id="GO:0006412">
    <property type="term" value="P:translation"/>
    <property type="evidence" value="ECO:0007669"/>
    <property type="project" value="UniProtKB-UniRule"/>
</dbReference>
<dbReference type="FunFam" id="3.30.70.600:FF:000001">
    <property type="entry name" value="30S ribosomal protein S10"/>
    <property type="match status" value="1"/>
</dbReference>
<dbReference type="Gene3D" id="3.30.70.600">
    <property type="entry name" value="Ribosomal protein S10 domain"/>
    <property type="match status" value="1"/>
</dbReference>
<dbReference type="HAMAP" id="MF_00508">
    <property type="entry name" value="Ribosomal_uS10"/>
    <property type="match status" value="1"/>
</dbReference>
<dbReference type="InterPro" id="IPR001848">
    <property type="entry name" value="Ribosomal_uS10"/>
</dbReference>
<dbReference type="InterPro" id="IPR018268">
    <property type="entry name" value="Ribosomal_uS10_CS"/>
</dbReference>
<dbReference type="InterPro" id="IPR027486">
    <property type="entry name" value="Ribosomal_uS10_dom"/>
</dbReference>
<dbReference type="InterPro" id="IPR036838">
    <property type="entry name" value="Ribosomal_uS10_dom_sf"/>
</dbReference>
<dbReference type="NCBIfam" id="NF001861">
    <property type="entry name" value="PRK00596.1"/>
    <property type="match status" value="1"/>
</dbReference>
<dbReference type="NCBIfam" id="TIGR01049">
    <property type="entry name" value="rpsJ_bact"/>
    <property type="match status" value="1"/>
</dbReference>
<dbReference type="PANTHER" id="PTHR11700">
    <property type="entry name" value="30S RIBOSOMAL PROTEIN S10 FAMILY MEMBER"/>
    <property type="match status" value="1"/>
</dbReference>
<dbReference type="Pfam" id="PF00338">
    <property type="entry name" value="Ribosomal_S10"/>
    <property type="match status" value="1"/>
</dbReference>
<dbReference type="PRINTS" id="PR00971">
    <property type="entry name" value="RIBOSOMALS10"/>
</dbReference>
<dbReference type="SMART" id="SM01403">
    <property type="entry name" value="Ribosomal_S10"/>
    <property type="match status" value="1"/>
</dbReference>
<dbReference type="SUPFAM" id="SSF54999">
    <property type="entry name" value="Ribosomal protein S10"/>
    <property type="match status" value="1"/>
</dbReference>
<dbReference type="PROSITE" id="PS00361">
    <property type="entry name" value="RIBOSOMAL_S10"/>
    <property type="match status" value="1"/>
</dbReference>
<organism>
    <name type="scientific">Xanthomonas campestris pv. campestris (strain B100)</name>
    <dbReference type="NCBI Taxonomy" id="509169"/>
    <lineage>
        <taxon>Bacteria</taxon>
        <taxon>Pseudomonadati</taxon>
        <taxon>Pseudomonadota</taxon>
        <taxon>Gammaproteobacteria</taxon>
        <taxon>Lysobacterales</taxon>
        <taxon>Lysobacteraceae</taxon>
        <taxon>Xanthomonas</taxon>
    </lineage>
</organism>
<comment type="function">
    <text evidence="1">Involved in the binding of tRNA to the ribosomes.</text>
</comment>
<comment type="subunit">
    <text evidence="1">Part of the 30S ribosomal subunit.</text>
</comment>
<comment type="similarity">
    <text evidence="1">Belongs to the universal ribosomal protein uS10 family.</text>
</comment>
<evidence type="ECO:0000255" key="1">
    <source>
        <dbReference type="HAMAP-Rule" id="MF_00508"/>
    </source>
</evidence>
<evidence type="ECO:0000305" key="2"/>
<sequence length="103" mass="11687">MADQKIRIRLKAFDHRLIDRSASEIVETAKRTGAQVRGPIPLPTKIERYTILVSPHADKDARDQYETRTHKRVLDIVDPNDKTVDALMKLELAAGVDVQIKLT</sequence>
<protein>
    <recommendedName>
        <fullName evidence="1">Small ribosomal subunit protein uS10</fullName>
    </recommendedName>
    <alternativeName>
        <fullName evidence="2">30S ribosomal protein S10</fullName>
    </alternativeName>
</protein>
<gene>
    <name evidence="1" type="primary">rpsJ</name>
    <name type="ordered locus">xcc-b100_3460</name>
</gene>
<accession>B0RU83</accession>
<feature type="chain" id="PRO_1000127204" description="Small ribosomal subunit protein uS10">
    <location>
        <begin position="1"/>
        <end position="103"/>
    </location>
</feature>
<reference key="1">
    <citation type="journal article" date="2008" name="J. Biotechnol.">
        <title>The genome of Xanthomonas campestris pv. campestris B100 and its use for the reconstruction of metabolic pathways involved in xanthan biosynthesis.</title>
        <authorList>
            <person name="Vorhoelter F.-J."/>
            <person name="Schneiker S."/>
            <person name="Goesmann A."/>
            <person name="Krause L."/>
            <person name="Bekel T."/>
            <person name="Kaiser O."/>
            <person name="Linke B."/>
            <person name="Patschkowski T."/>
            <person name="Rueckert C."/>
            <person name="Schmid J."/>
            <person name="Sidhu V.K."/>
            <person name="Sieber V."/>
            <person name="Tauch A."/>
            <person name="Watt S.A."/>
            <person name="Weisshaar B."/>
            <person name="Becker A."/>
            <person name="Niehaus K."/>
            <person name="Puehler A."/>
        </authorList>
    </citation>
    <scope>NUCLEOTIDE SEQUENCE [LARGE SCALE GENOMIC DNA]</scope>
    <source>
        <strain>B100</strain>
    </source>
</reference>
<keyword id="KW-0687">Ribonucleoprotein</keyword>
<keyword id="KW-0689">Ribosomal protein</keyword>
<name>RS10_XANCB</name>
<proteinExistence type="inferred from homology"/>